<sequence>MSKKEQSLMTPYLQFNRSQWAALRDSVPMTLTEGEIARLKGINEDLSLEEVAEIYLPLSRLLNFYISSNLRRQAVLEQFLGTNGQRIPYIISIAGSVAVGKSTTARVLQALLSRWPEHRSVELITTDGFLHPNEVLKERGLMKKKGFPLSYDMHRLVKFVSDLKSGAPNVTAPVYSHLIYDRIPDGDKTVAQPDILILEGLNVLQSGMDYPHDPHHVFVSDFVDFSIYVDAPENLLQNWYINRFLKFREGAFTDPDSYFHNYAQLSEAEAVNVATALWNEINYVNLKENILPTRERASLILTKSENHAVDQVRLRK</sequence>
<dbReference type="EC" id="2.7.1.33" evidence="1"/>
<dbReference type="EMBL" id="CP000653">
    <property type="protein sequence ID" value="ABP58879.1"/>
    <property type="status" value="ALT_INIT"/>
    <property type="molecule type" value="Genomic_DNA"/>
</dbReference>
<dbReference type="RefSeq" id="WP_041689217.1">
    <property type="nucleotide sequence ID" value="NC_009436.1"/>
</dbReference>
<dbReference type="SMR" id="A4W599"/>
<dbReference type="STRING" id="399742.Ent638_0189"/>
<dbReference type="KEGG" id="ent:Ent638_0189"/>
<dbReference type="eggNOG" id="COG1072">
    <property type="taxonomic scope" value="Bacteria"/>
</dbReference>
<dbReference type="HOGENOM" id="CLU_053818_1_1_6"/>
<dbReference type="OrthoDB" id="1550976at2"/>
<dbReference type="UniPathway" id="UPA00241">
    <property type="reaction ID" value="UER00352"/>
</dbReference>
<dbReference type="Proteomes" id="UP000000230">
    <property type="component" value="Chromosome"/>
</dbReference>
<dbReference type="GO" id="GO:0005737">
    <property type="term" value="C:cytoplasm"/>
    <property type="evidence" value="ECO:0007669"/>
    <property type="project" value="UniProtKB-SubCell"/>
</dbReference>
<dbReference type="GO" id="GO:0005524">
    <property type="term" value="F:ATP binding"/>
    <property type="evidence" value="ECO:0007669"/>
    <property type="project" value="UniProtKB-UniRule"/>
</dbReference>
<dbReference type="GO" id="GO:0004594">
    <property type="term" value="F:pantothenate kinase activity"/>
    <property type="evidence" value="ECO:0007669"/>
    <property type="project" value="UniProtKB-UniRule"/>
</dbReference>
<dbReference type="GO" id="GO:0015937">
    <property type="term" value="P:coenzyme A biosynthetic process"/>
    <property type="evidence" value="ECO:0007669"/>
    <property type="project" value="UniProtKB-UniRule"/>
</dbReference>
<dbReference type="CDD" id="cd02025">
    <property type="entry name" value="PanK"/>
    <property type="match status" value="1"/>
</dbReference>
<dbReference type="FunFam" id="3.40.50.300:FF:000242">
    <property type="entry name" value="Pantothenate kinase"/>
    <property type="match status" value="1"/>
</dbReference>
<dbReference type="Gene3D" id="3.40.50.300">
    <property type="entry name" value="P-loop containing nucleotide triphosphate hydrolases"/>
    <property type="match status" value="1"/>
</dbReference>
<dbReference type="HAMAP" id="MF_00215">
    <property type="entry name" value="Pantothen_kinase_1"/>
    <property type="match status" value="1"/>
</dbReference>
<dbReference type="InterPro" id="IPR027417">
    <property type="entry name" value="P-loop_NTPase"/>
</dbReference>
<dbReference type="InterPro" id="IPR004566">
    <property type="entry name" value="PanK"/>
</dbReference>
<dbReference type="InterPro" id="IPR006083">
    <property type="entry name" value="PRK/URK"/>
</dbReference>
<dbReference type="NCBIfam" id="TIGR00554">
    <property type="entry name" value="panK_bact"/>
    <property type="match status" value="1"/>
</dbReference>
<dbReference type="PANTHER" id="PTHR10285">
    <property type="entry name" value="URIDINE KINASE"/>
    <property type="match status" value="1"/>
</dbReference>
<dbReference type="Pfam" id="PF00485">
    <property type="entry name" value="PRK"/>
    <property type="match status" value="1"/>
</dbReference>
<dbReference type="PIRSF" id="PIRSF000545">
    <property type="entry name" value="Pantothenate_kin"/>
    <property type="match status" value="1"/>
</dbReference>
<dbReference type="SUPFAM" id="SSF52540">
    <property type="entry name" value="P-loop containing nucleoside triphosphate hydrolases"/>
    <property type="match status" value="1"/>
</dbReference>
<reference key="1">
    <citation type="journal article" date="2010" name="PLoS Genet.">
        <title>Genome sequence of the plant growth promoting endophytic bacterium Enterobacter sp. 638.</title>
        <authorList>
            <person name="Taghavi S."/>
            <person name="van der Lelie D."/>
            <person name="Hoffman A."/>
            <person name="Zhang Y.B."/>
            <person name="Walla M.D."/>
            <person name="Vangronsveld J."/>
            <person name="Newman L."/>
            <person name="Monchy S."/>
        </authorList>
    </citation>
    <scope>NUCLEOTIDE SEQUENCE [LARGE SCALE GENOMIC DNA]</scope>
    <source>
        <strain>638</strain>
    </source>
</reference>
<name>COAA_ENT38</name>
<feature type="chain" id="PRO_0000325551" description="Pantothenate kinase">
    <location>
        <begin position="1"/>
        <end position="316"/>
    </location>
</feature>
<feature type="binding site" evidence="1">
    <location>
        <begin position="95"/>
        <end position="102"/>
    </location>
    <ligand>
        <name>ATP</name>
        <dbReference type="ChEBI" id="CHEBI:30616"/>
    </ligand>
</feature>
<evidence type="ECO:0000255" key="1">
    <source>
        <dbReference type="HAMAP-Rule" id="MF_00215"/>
    </source>
</evidence>
<evidence type="ECO:0000305" key="2"/>
<gene>
    <name evidence="1" type="primary">coaA</name>
    <name type="ordered locus">Ent638_0189</name>
</gene>
<keyword id="KW-0067">ATP-binding</keyword>
<keyword id="KW-0173">Coenzyme A biosynthesis</keyword>
<keyword id="KW-0963">Cytoplasm</keyword>
<keyword id="KW-0418">Kinase</keyword>
<keyword id="KW-0547">Nucleotide-binding</keyword>
<keyword id="KW-0808">Transferase</keyword>
<proteinExistence type="inferred from homology"/>
<comment type="catalytic activity">
    <reaction evidence="1">
        <text>(R)-pantothenate + ATP = (R)-4'-phosphopantothenate + ADP + H(+)</text>
        <dbReference type="Rhea" id="RHEA:16373"/>
        <dbReference type="ChEBI" id="CHEBI:10986"/>
        <dbReference type="ChEBI" id="CHEBI:15378"/>
        <dbReference type="ChEBI" id="CHEBI:29032"/>
        <dbReference type="ChEBI" id="CHEBI:30616"/>
        <dbReference type="ChEBI" id="CHEBI:456216"/>
        <dbReference type="EC" id="2.7.1.33"/>
    </reaction>
</comment>
<comment type="pathway">
    <text evidence="1">Cofactor biosynthesis; coenzyme A biosynthesis; CoA from (R)-pantothenate: step 1/5.</text>
</comment>
<comment type="subcellular location">
    <subcellularLocation>
        <location evidence="1">Cytoplasm</location>
    </subcellularLocation>
</comment>
<comment type="similarity">
    <text evidence="1">Belongs to the prokaryotic pantothenate kinase family.</text>
</comment>
<comment type="sequence caution" evidence="2">
    <conflict type="erroneous initiation">
        <sequence resource="EMBL-CDS" id="ABP58879"/>
    </conflict>
</comment>
<accession>A4W599</accession>
<organism>
    <name type="scientific">Enterobacter sp. (strain 638)</name>
    <dbReference type="NCBI Taxonomy" id="399742"/>
    <lineage>
        <taxon>Bacteria</taxon>
        <taxon>Pseudomonadati</taxon>
        <taxon>Pseudomonadota</taxon>
        <taxon>Gammaproteobacteria</taxon>
        <taxon>Enterobacterales</taxon>
        <taxon>Enterobacteriaceae</taxon>
        <taxon>Enterobacter</taxon>
    </lineage>
</organism>
<protein>
    <recommendedName>
        <fullName evidence="1">Pantothenate kinase</fullName>
        <ecNumber evidence="1">2.7.1.33</ecNumber>
    </recommendedName>
    <alternativeName>
        <fullName evidence="1">Pantothenic acid kinase</fullName>
    </alternativeName>
</protein>